<protein>
    <recommendedName>
        <fullName evidence="1">Uroporphyrinogen decarboxylase</fullName>
        <shortName evidence="1">UPD</shortName>
        <shortName evidence="1">URO-D</shortName>
        <ecNumber evidence="1">4.1.1.37</ecNumber>
    </recommendedName>
</protein>
<sequence length="357" mass="39436">MTTLKNDRFLRALLREPVDTTPIWMMRQAGRYLPEYRETRSKAGDFLSLCKNTEFACEVTLQPLRRYDLDAAILFSDILTIPDALGLGLYFETGEGPKFHKTVRTEQDVANLPKLNAKADLDYVMNAVSTIRSALGGQVPLIGFSGSPWTLATYMVEGGSSKEFRFTKQMMYAQPEVLHALLDHLADSVIDYLNAQIDAGAQAIQIFDSWGGALAHREYVEFSLNYMKKIIAGLQREKDGRRIPVIVFTKGGGQWLEPMITTGADALGLDWTTPLNTARNVVSGRVALQGNLDPAVLYGSAASIEKAVKAMLDDAYANGEKTGYVANLGHGITQWVDPAQPKIFVDTVHEYSAKYLG</sequence>
<accession>A3M795</accession>
<dbReference type="EC" id="4.1.1.37" evidence="1"/>
<dbReference type="EMBL" id="CP000521">
    <property type="protein sequence ID" value="ABO12789.2"/>
    <property type="molecule type" value="Genomic_DNA"/>
</dbReference>
<dbReference type="RefSeq" id="WP_000209395.1">
    <property type="nucleotide sequence ID" value="NZ_CP053098.1"/>
</dbReference>
<dbReference type="SMR" id="A3M795"/>
<dbReference type="KEGG" id="acb:A1S_2370"/>
<dbReference type="HOGENOM" id="CLU_040933_0_0_6"/>
<dbReference type="UniPathway" id="UPA00251">
    <property type="reaction ID" value="UER00321"/>
</dbReference>
<dbReference type="GO" id="GO:0005829">
    <property type="term" value="C:cytosol"/>
    <property type="evidence" value="ECO:0007669"/>
    <property type="project" value="TreeGrafter"/>
</dbReference>
<dbReference type="GO" id="GO:0004853">
    <property type="term" value="F:uroporphyrinogen decarboxylase activity"/>
    <property type="evidence" value="ECO:0007669"/>
    <property type="project" value="UniProtKB-UniRule"/>
</dbReference>
<dbReference type="GO" id="GO:0019353">
    <property type="term" value="P:protoporphyrinogen IX biosynthetic process from glutamate"/>
    <property type="evidence" value="ECO:0007669"/>
    <property type="project" value="TreeGrafter"/>
</dbReference>
<dbReference type="CDD" id="cd00717">
    <property type="entry name" value="URO-D"/>
    <property type="match status" value="1"/>
</dbReference>
<dbReference type="FunFam" id="3.20.20.210:FF:000001">
    <property type="entry name" value="Uroporphyrinogen decarboxylase"/>
    <property type="match status" value="1"/>
</dbReference>
<dbReference type="Gene3D" id="3.20.20.210">
    <property type="match status" value="1"/>
</dbReference>
<dbReference type="HAMAP" id="MF_00218">
    <property type="entry name" value="URO_D"/>
    <property type="match status" value="1"/>
</dbReference>
<dbReference type="InterPro" id="IPR038071">
    <property type="entry name" value="UROD/MetE-like_sf"/>
</dbReference>
<dbReference type="InterPro" id="IPR006361">
    <property type="entry name" value="Uroporphyrinogen_deCO2ase_HemE"/>
</dbReference>
<dbReference type="InterPro" id="IPR000257">
    <property type="entry name" value="Uroporphyrinogen_deCOase"/>
</dbReference>
<dbReference type="NCBIfam" id="TIGR01464">
    <property type="entry name" value="hemE"/>
    <property type="match status" value="1"/>
</dbReference>
<dbReference type="PANTHER" id="PTHR21091">
    <property type="entry name" value="METHYLTETRAHYDROFOLATE:HOMOCYSTEINE METHYLTRANSFERASE RELATED"/>
    <property type="match status" value="1"/>
</dbReference>
<dbReference type="PANTHER" id="PTHR21091:SF169">
    <property type="entry name" value="UROPORPHYRINOGEN DECARBOXYLASE"/>
    <property type="match status" value="1"/>
</dbReference>
<dbReference type="Pfam" id="PF01208">
    <property type="entry name" value="URO-D"/>
    <property type="match status" value="1"/>
</dbReference>
<dbReference type="SUPFAM" id="SSF51726">
    <property type="entry name" value="UROD/MetE-like"/>
    <property type="match status" value="1"/>
</dbReference>
<dbReference type="PROSITE" id="PS00906">
    <property type="entry name" value="UROD_1"/>
    <property type="match status" value="1"/>
</dbReference>
<dbReference type="PROSITE" id="PS00907">
    <property type="entry name" value="UROD_2"/>
    <property type="match status" value="1"/>
</dbReference>
<evidence type="ECO:0000255" key="1">
    <source>
        <dbReference type="HAMAP-Rule" id="MF_00218"/>
    </source>
</evidence>
<organism>
    <name type="scientific">Acinetobacter baumannii (strain ATCC 17978 / DSM 105126 / CIP 53.77 / LMG 1025 / NCDC KC755 / 5377)</name>
    <dbReference type="NCBI Taxonomy" id="400667"/>
    <lineage>
        <taxon>Bacteria</taxon>
        <taxon>Pseudomonadati</taxon>
        <taxon>Pseudomonadota</taxon>
        <taxon>Gammaproteobacteria</taxon>
        <taxon>Moraxellales</taxon>
        <taxon>Moraxellaceae</taxon>
        <taxon>Acinetobacter</taxon>
        <taxon>Acinetobacter calcoaceticus/baumannii complex</taxon>
    </lineage>
</organism>
<keyword id="KW-0963">Cytoplasm</keyword>
<keyword id="KW-0210">Decarboxylase</keyword>
<keyword id="KW-0456">Lyase</keyword>
<keyword id="KW-0627">Porphyrin biosynthesis</keyword>
<reference key="1">
    <citation type="journal article" date="2007" name="Genes Dev.">
        <title>New insights into Acinetobacter baumannii pathogenesis revealed by high-density pyrosequencing and transposon mutagenesis.</title>
        <authorList>
            <person name="Smith M.G."/>
            <person name="Gianoulis T.A."/>
            <person name="Pukatzki S."/>
            <person name="Mekalanos J.J."/>
            <person name="Ornston L.N."/>
            <person name="Gerstein M."/>
            <person name="Snyder M."/>
        </authorList>
    </citation>
    <scope>NUCLEOTIDE SEQUENCE [LARGE SCALE GENOMIC DNA]</scope>
    <source>
        <strain>ATCC 17978 / DSM 105126 / CIP 53.77 / LMG 1025 / NCDC KC755 / 5377</strain>
    </source>
</reference>
<proteinExistence type="inferred from homology"/>
<name>DCUP_ACIBT</name>
<feature type="chain" id="PRO_1000099968" description="Uroporphyrinogen decarboxylase">
    <location>
        <begin position="1"/>
        <end position="357"/>
    </location>
</feature>
<feature type="binding site" evidence="1">
    <location>
        <begin position="27"/>
        <end position="31"/>
    </location>
    <ligand>
        <name>substrate</name>
    </ligand>
</feature>
<feature type="binding site" evidence="1">
    <location>
        <position position="77"/>
    </location>
    <ligand>
        <name>substrate</name>
    </ligand>
</feature>
<feature type="binding site" evidence="1">
    <location>
        <position position="154"/>
    </location>
    <ligand>
        <name>substrate</name>
    </ligand>
</feature>
<feature type="binding site" evidence="1">
    <location>
        <position position="209"/>
    </location>
    <ligand>
        <name>substrate</name>
    </ligand>
</feature>
<feature type="binding site" evidence="1">
    <location>
        <position position="330"/>
    </location>
    <ligand>
        <name>substrate</name>
    </ligand>
</feature>
<feature type="site" description="Transition state stabilizer" evidence="1">
    <location>
        <position position="77"/>
    </location>
</feature>
<comment type="function">
    <text evidence="1">Catalyzes the decarboxylation of four acetate groups of uroporphyrinogen-III to yield coproporphyrinogen-III.</text>
</comment>
<comment type="catalytic activity">
    <reaction evidence="1">
        <text>uroporphyrinogen III + 4 H(+) = coproporphyrinogen III + 4 CO2</text>
        <dbReference type="Rhea" id="RHEA:19865"/>
        <dbReference type="ChEBI" id="CHEBI:15378"/>
        <dbReference type="ChEBI" id="CHEBI:16526"/>
        <dbReference type="ChEBI" id="CHEBI:57308"/>
        <dbReference type="ChEBI" id="CHEBI:57309"/>
        <dbReference type="EC" id="4.1.1.37"/>
    </reaction>
</comment>
<comment type="pathway">
    <text evidence="1">Porphyrin-containing compound metabolism; protoporphyrin-IX biosynthesis; coproporphyrinogen-III from 5-aminolevulinate: step 4/4.</text>
</comment>
<comment type="subunit">
    <text evidence="1">Homodimer.</text>
</comment>
<comment type="subcellular location">
    <subcellularLocation>
        <location evidence="1">Cytoplasm</location>
    </subcellularLocation>
</comment>
<comment type="similarity">
    <text evidence="1">Belongs to the uroporphyrinogen decarboxylase family.</text>
</comment>
<gene>
    <name evidence="1" type="primary">hemE</name>
    <name type="ordered locus">A1S_2370</name>
</gene>